<name>ATPG_HISS1</name>
<comment type="function">
    <text evidence="1">Produces ATP from ADP in the presence of a proton gradient across the membrane. The gamma chain is believed to be important in regulating ATPase activity and the flow of protons through the CF(0) complex.</text>
</comment>
<comment type="subunit">
    <text evidence="1">F-type ATPases have 2 components, CF(1) - the catalytic core - and CF(0) - the membrane proton channel. CF(1) has five subunits: alpha(3), beta(3), gamma(1), delta(1), epsilon(1). CF(0) has three main subunits: a, b and c.</text>
</comment>
<comment type="subcellular location">
    <subcellularLocation>
        <location evidence="1">Cell inner membrane</location>
        <topology evidence="1">Peripheral membrane protein</topology>
    </subcellularLocation>
</comment>
<comment type="similarity">
    <text evidence="1">Belongs to the ATPase gamma chain family.</text>
</comment>
<feature type="chain" id="PRO_1000053223" description="ATP synthase gamma chain">
    <location>
        <begin position="1"/>
        <end position="289"/>
    </location>
</feature>
<evidence type="ECO:0000255" key="1">
    <source>
        <dbReference type="HAMAP-Rule" id="MF_00815"/>
    </source>
</evidence>
<protein>
    <recommendedName>
        <fullName evidence="1">ATP synthase gamma chain</fullName>
    </recommendedName>
    <alternativeName>
        <fullName evidence="1">ATP synthase F1 sector gamma subunit</fullName>
    </alternativeName>
    <alternativeName>
        <fullName evidence="1">F-ATPase gamma subunit</fullName>
    </alternativeName>
</protein>
<dbReference type="EMBL" id="CP000436">
    <property type="protein sequence ID" value="ABI25965.1"/>
    <property type="molecule type" value="Genomic_DNA"/>
</dbReference>
<dbReference type="SMR" id="Q0I5X2"/>
<dbReference type="KEGG" id="hso:HS_1697"/>
<dbReference type="eggNOG" id="COG0224">
    <property type="taxonomic scope" value="Bacteria"/>
</dbReference>
<dbReference type="HOGENOM" id="CLU_050669_0_1_6"/>
<dbReference type="GO" id="GO:0005886">
    <property type="term" value="C:plasma membrane"/>
    <property type="evidence" value="ECO:0007669"/>
    <property type="project" value="UniProtKB-SubCell"/>
</dbReference>
<dbReference type="GO" id="GO:0045259">
    <property type="term" value="C:proton-transporting ATP synthase complex"/>
    <property type="evidence" value="ECO:0007669"/>
    <property type="project" value="UniProtKB-KW"/>
</dbReference>
<dbReference type="GO" id="GO:0005524">
    <property type="term" value="F:ATP binding"/>
    <property type="evidence" value="ECO:0007669"/>
    <property type="project" value="UniProtKB-UniRule"/>
</dbReference>
<dbReference type="GO" id="GO:0046933">
    <property type="term" value="F:proton-transporting ATP synthase activity, rotational mechanism"/>
    <property type="evidence" value="ECO:0007669"/>
    <property type="project" value="UniProtKB-UniRule"/>
</dbReference>
<dbReference type="GO" id="GO:0042777">
    <property type="term" value="P:proton motive force-driven plasma membrane ATP synthesis"/>
    <property type="evidence" value="ECO:0007669"/>
    <property type="project" value="UniProtKB-UniRule"/>
</dbReference>
<dbReference type="CDD" id="cd12151">
    <property type="entry name" value="F1-ATPase_gamma"/>
    <property type="match status" value="1"/>
</dbReference>
<dbReference type="FunFam" id="1.10.287.80:FF:000005">
    <property type="entry name" value="ATP synthase gamma chain"/>
    <property type="match status" value="1"/>
</dbReference>
<dbReference type="FunFam" id="3.40.1380.10:FF:000006">
    <property type="entry name" value="ATP synthase gamma chain"/>
    <property type="match status" value="1"/>
</dbReference>
<dbReference type="Gene3D" id="3.40.1380.10">
    <property type="match status" value="1"/>
</dbReference>
<dbReference type="Gene3D" id="1.10.287.80">
    <property type="entry name" value="ATP synthase, gamma subunit, helix hairpin domain"/>
    <property type="match status" value="1"/>
</dbReference>
<dbReference type="HAMAP" id="MF_00815">
    <property type="entry name" value="ATP_synth_gamma_bact"/>
    <property type="match status" value="1"/>
</dbReference>
<dbReference type="InterPro" id="IPR035968">
    <property type="entry name" value="ATP_synth_F1_ATPase_gsu"/>
</dbReference>
<dbReference type="InterPro" id="IPR000131">
    <property type="entry name" value="ATP_synth_F1_gsu"/>
</dbReference>
<dbReference type="InterPro" id="IPR023632">
    <property type="entry name" value="ATP_synth_F1_gsu_CS"/>
</dbReference>
<dbReference type="NCBIfam" id="TIGR01146">
    <property type="entry name" value="ATPsyn_F1gamma"/>
    <property type="match status" value="1"/>
</dbReference>
<dbReference type="NCBIfam" id="NF004144">
    <property type="entry name" value="PRK05621.1-1"/>
    <property type="match status" value="1"/>
</dbReference>
<dbReference type="PANTHER" id="PTHR11693">
    <property type="entry name" value="ATP SYNTHASE GAMMA CHAIN"/>
    <property type="match status" value="1"/>
</dbReference>
<dbReference type="PANTHER" id="PTHR11693:SF22">
    <property type="entry name" value="ATP SYNTHASE SUBUNIT GAMMA, MITOCHONDRIAL"/>
    <property type="match status" value="1"/>
</dbReference>
<dbReference type="Pfam" id="PF00231">
    <property type="entry name" value="ATP-synt"/>
    <property type="match status" value="1"/>
</dbReference>
<dbReference type="PRINTS" id="PR00126">
    <property type="entry name" value="ATPASEGAMMA"/>
</dbReference>
<dbReference type="SUPFAM" id="SSF52943">
    <property type="entry name" value="ATP synthase (F1-ATPase), gamma subunit"/>
    <property type="match status" value="1"/>
</dbReference>
<dbReference type="PROSITE" id="PS00153">
    <property type="entry name" value="ATPASE_GAMMA"/>
    <property type="match status" value="1"/>
</dbReference>
<sequence>MAGAKEIRTKISSVQSTQKITKAMEMVAASKMRKTQDRMSSSRPYSKAIQGVISHISKANIDYQHPFLIEREVKNVGILIISTDRGLCGGLNVNLFKTALSEIKNWKEQNVEVSLGLIGAKGIGFFQSLGLNIKAQHSGMGDTPVAEELIGIANRMFEAYKEGKIDAIYVTYNKFINTMSQKPIMEKLVPLPELDNDSLGKNSDNWEYIYEPNPQTLLDSLLVRYLESQVYQAVVENLASEQAARMVAMKAATDNAGNLINDLQLVYNKARQASITNELNEIVAGAAAI</sequence>
<keyword id="KW-0066">ATP synthesis</keyword>
<keyword id="KW-0997">Cell inner membrane</keyword>
<keyword id="KW-1003">Cell membrane</keyword>
<keyword id="KW-0139">CF(1)</keyword>
<keyword id="KW-0375">Hydrogen ion transport</keyword>
<keyword id="KW-0406">Ion transport</keyword>
<keyword id="KW-0472">Membrane</keyword>
<keyword id="KW-0813">Transport</keyword>
<proteinExistence type="inferred from homology"/>
<organism>
    <name type="scientific">Histophilus somni (strain 129Pt)</name>
    <name type="common">Haemophilus somnus</name>
    <dbReference type="NCBI Taxonomy" id="205914"/>
    <lineage>
        <taxon>Bacteria</taxon>
        <taxon>Pseudomonadati</taxon>
        <taxon>Pseudomonadota</taxon>
        <taxon>Gammaproteobacteria</taxon>
        <taxon>Pasteurellales</taxon>
        <taxon>Pasteurellaceae</taxon>
        <taxon>Histophilus</taxon>
    </lineage>
</organism>
<gene>
    <name evidence="1" type="primary">atpG</name>
    <name type="ordered locus">HS_1697</name>
</gene>
<reference key="1">
    <citation type="journal article" date="2007" name="J. Bacteriol.">
        <title>Complete genome sequence of Haemophilus somnus (Histophilus somni) strain 129Pt and comparison to Haemophilus ducreyi 35000HP and Haemophilus influenzae Rd.</title>
        <authorList>
            <person name="Challacombe J.F."/>
            <person name="Duncan A.J."/>
            <person name="Brettin T.S."/>
            <person name="Bruce D."/>
            <person name="Chertkov O."/>
            <person name="Detter J.C."/>
            <person name="Han C.S."/>
            <person name="Misra M."/>
            <person name="Richardson P."/>
            <person name="Tapia R."/>
            <person name="Thayer N."/>
            <person name="Xie G."/>
            <person name="Inzana T.J."/>
        </authorList>
    </citation>
    <scope>NUCLEOTIDE SEQUENCE [LARGE SCALE GENOMIC DNA]</scope>
    <source>
        <strain>129Pt</strain>
    </source>
</reference>
<accession>Q0I5X2</accession>